<gene>
    <name evidence="1" type="primary">pyrH</name>
    <name type="ordered locus">Psyc_1535</name>
</gene>
<keyword id="KW-0067">ATP-binding</keyword>
<keyword id="KW-0963">Cytoplasm</keyword>
<keyword id="KW-0418">Kinase</keyword>
<keyword id="KW-0547">Nucleotide-binding</keyword>
<keyword id="KW-0665">Pyrimidine biosynthesis</keyword>
<keyword id="KW-1185">Reference proteome</keyword>
<keyword id="KW-0808">Transferase</keyword>
<comment type="function">
    <text evidence="1">Catalyzes the reversible phosphorylation of UMP to UDP.</text>
</comment>
<comment type="catalytic activity">
    <reaction evidence="1">
        <text>UMP + ATP = UDP + ADP</text>
        <dbReference type="Rhea" id="RHEA:24400"/>
        <dbReference type="ChEBI" id="CHEBI:30616"/>
        <dbReference type="ChEBI" id="CHEBI:57865"/>
        <dbReference type="ChEBI" id="CHEBI:58223"/>
        <dbReference type="ChEBI" id="CHEBI:456216"/>
        <dbReference type="EC" id="2.7.4.22"/>
    </reaction>
</comment>
<comment type="activity regulation">
    <text evidence="1">Inhibited by UTP.</text>
</comment>
<comment type="pathway">
    <text evidence="1">Pyrimidine metabolism; CTP biosynthesis via de novo pathway; UDP from UMP (UMPK route): step 1/1.</text>
</comment>
<comment type="subunit">
    <text evidence="1">Homohexamer.</text>
</comment>
<comment type="subcellular location">
    <subcellularLocation>
        <location evidence="1">Cytoplasm</location>
    </subcellularLocation>
</comment>
<comment type="similarity">
    <text evidence="1">Belongs to the UMP kinase family.</text>
</comment>
<dbReference type="EC" id="2.7.4.22" evidence="1"/>
<dbReference type="EMBL" id="CP000082">
    <property type="protein sequence ID" value="AAZ19383.1"/>
    <property type="molecule type" value="Genomic_DNA"/>
</dbReference>
<dbReference type="RefSeq" id="WP_011280800.1">
    <property type="nucleotide sequence ID" value="NC_007204.1"/>
</dbReference>
<dbReference type="SMR" id="Q4FRH5"/>
<dbReference type="STRING" id="259536.Psyc_1535"/>
<dbReference type="KEGG" id="par:Psyc_1535"/>
<dbReference type="eggNOG" id="COG0528">
    <property type="taxonomic scope" value="Bacteria"/>
</dbReference>
<dbReference type="HOGENOM" id="CLU_033861_0_0_6"/>
<dbReference type="OrthoDB" id="9807458at2"/>
<dbReference type="UniPathway" id="UPA00159">
    <property type="reaction ID" value="UER00275"/>
</dbReference>
<dbReference type="Proteomes" id="UP000000546">
    <property type="component" value="Chromosome"/>
</dbReference>
<dbReference type="GO" id="GO:0005829">
    <property type="term" value="C:cytosol"/>
    <property type="evidence" value="ECO:0007669"/>
    <property type="project" value="TreeGrafter"/>
</dbReference>
<dbReference type="GO" id="GO:0005524">
    <property type="term" value="F:ATP binding"/>
    <property type="evidence" value="ECO:0007669"/>
    <property type="project" value="UniProtKB-KW"/>
</dbReference>
<dbReference type="GO" id="GO:0033862">
    <property type="term" value="F:UMP kinase activity"/>
    <property type="evidence" value="ECO:0007669"/>
    <property type="project" value="UniProtKB-EC"/>
</dbReference>
<dbReference type="GO" id="GO:0044210">
    <property type="term" value="P:'de novo' CTP biosynthetic process"/>
    <property type="evidence" value="ECO:0007669"/>
    <property type="project" value="UniProtKB-UniRule"/>
</dbReference>
<dbReference type="GO" id="GO:0006225">
    <property type="term" value="P:UDP biosynthetic process"/>
    <property type="evidence" value="ECO:0007669"/>
    <property type="project" value="TreeGrafter"/>
</dbReference>
<dbReference type="CDD" id="cd04254">
    <property type="entry name" value="AAK_UMPK-PyrH-Ec"/>
    <property type="match status" value="1"/>
</dbReference>
<dbReference type="FunFam" id="3.40.1160.10:FF:000001">
    <property type="entry name" value="Uridylate kinase"/>
    <property type="match status" value="1"/>
</dbReference>
<dbReference type="Gene3D" id="3.40.1160.10">
    <property type="entry name" value="Acetylglutamate kinase-like"/>
    <property type="match status" value="1"/>
</dbReference>
<dbReference type="HAMAP" id="MF_01220_B">
    <property type="entry name" value="PyrH_B"/>
    <property type="match status" value="1"/>
</dbReference>
<dbReference type="InterPro" id="IPR036393">
    <property type="entry name" value="AceGlu_kinase-like_sf"/>
</dbReference>
<dbReference type="InterPro" id="IPR001048">
    <property type="entry name" value="Asp/Glu/Uridylate_kinase"/>
</dbReference>
<dbReference type="InterPro" id="IPR011817">
    <property type="entry name" value="Uridylate_kinase"/>
</dbReference>
<dbReference type="InterPro" id="IPR015963">
    <property type="entry name" value="Uridylate_kinase_bac"/>
</dbReference>
<dbReference type="NCBIfam" id="TIGR02075">
    <property type="entry name" value="pyrH_bact"/>
    <property type="match status" value="1"/>
</dbReference>
<dbReference type="PANTHER" id="PTHR42833">
    <property type="entry name" value="URIDYLATE KINASE"/>
    <property type="match status" value="1"/>
</dbReference>
<dbReference type="PANTHER" id="PTHR42833:SF4">
    <property type="entry name" value="URIDYLATE KINASE PUMPKIN, CHLOROPLASTIC"/>
    <property type="match status" value="1"/>
</dbReference>
<dbReference type="Pfam" id="PF00696">
    <property type="entry name" value="AA_kinase"/>
    <property type="match status" value="1"/>
</dbReference>
<dbReference type="PIRSF" id="PIRSF005650">
    <property type="entry name" value="Uridylate_kin"/>
    <property type="match status" value="1"/>
</dbReference>
<dbReference type="SUPFAM" id="SSF53633">
    <property type="entry name" value="Carbamate kinase-like"/>
    <property type="match status" value="1"/>
</dbReference>
<accession>Q4FRH5</accession>
<name>PYRH_PSYA2</name>
<feature type="chain" id="PRO_0000323929" description="Uridylate kinase">
    <location>
        <begin position="1"/>
        <end position="241"/>
    </location>
</feature>
<feature type="binding site" evidence="1">
    <location>
        <begin position="14"/>
        <end position="17"/>
    </location>
    <ligand>
        <name>ATP</name>
        <dbReference type="ChEBI" id="CHEBI:30616"/>
    </ligand>
</feature>
<feature type="binding site" evidence="1">
    <location>
        <position position="56"/>
    </location>
    <ligand>
        <name>UMP</name>
        <dbReference type="ChEBI" id="CHEBI:57865"/>
    </ligand>
</feature>
<feature type="binding site" evidence="1">
    <location>
        <position position="57"/>
    </location>
    <ligand>
        <name>ATP</name>
        <dbReference type="ChEBI" id="CHEBI:30616"/>
    </ligand>
</feature>
<feature type="binding site" evidence="1">
    <location>
        <position position="61"/>
    </location>
    <ligand>
        <name>ATP</name>
        <dbReference type="ChEBI" id="CHEBI:30616"/>
    </ligand>
</feature>
<feature type="binding site" evidence="1">
    <location>
        <position position="77"/>
    </location>
    <ligand>
        <name>UMP</name>
        <dbReference type="ChEBI" id="CHEBI:57865"/>
    </ligand>
</feature>
<feature type="binding site" evidence="1">
    <location>
        <begin position="138"/>
        <end position="145"/>
    </location>
    <ligand>
        <name>UMP</name>
        <dbReference type="ChEBI" id="CHEBI:57865"/>
    </ligand>
</feature>
<feature type="binding site" evidence="1">
    <location>
        <position position="165"/>
    </location>
    <ligand>
        <name>ATP</name>
        <dbReference type="ChEBI" id="CHEBI:30616"/>
    </ligand>
</feature>
<feature type="binding site" evidence="1">
    <location>
        <position position="171"/>
    </location>
    <ligand>
        <name>ATP</name>
        <dbReference type="ChEBI" id="CHEBI:30616"/>
    </ligand>
</feature>
<feature type="binding site" evidence="1">
    <location>
        <position position="174"/>
    </location>
    <ligand>
        <name>ATP</name>
        <dbReference type="ChEBI" id="CHEBI:30616"/>
    </ligand>
</feature>
<proteinExistence type="inferred from homology"/>
<organism>
    <name type="scientific">Psychrobacter arcticus (strain DSM 17307 / VKM B-2377 / 273-4)</name>
    <dbReference type="NCBI Taxonomy" id="259536"/>
    <lineage>
        <taxon>Bacteria</taxon>
        <taxon>Pseudomonadati</taxon>
        <taxon>Pseudomonadota</taxon>
        <taxon>Gammaproteobacteria</taxon>
        <taxon>Moraxellales</taxon>
        <taxon>Moraxellaceae</taxon>
        <taxon>Psychrobacter</taxon>
    </lineage>
</organism>
<reference key="1">
    <citation type="journal article" date="2010" name="Appl. Environ. Microbiol.">
        <title>The genome sequence of Psychrobacter arcticus 273-4, a psychroactive Siberian permafrost bacterium, reveals mechanisms for adaptation to low-temperature growth.</title>
        <authorList>
            <person name="Ayala-del-Rio H.L."/>
            <person name="Chain P.S."/>
            <person name="Grzymski J.J."/>
            <person name="Ponder M.A."/>
            <person name="Ivanova N."/>
            <person name="Bergholz P.W."/>
            <person name="Di Bartolo G."/>
            <person name="Hauser L."/>
            <person name="Land M."/>
            <person name="Bakermans C."/>
            <person name="Rodrigues D."/>
            <person name="Klappenbach J."/>
            <person name="Zarka D."/>
            <person name="Larimer F."/>
            <person name="Richardson P."/>
            <person name="Murray A."/>
            <person name="Thomashow M."/>
            <person name="Tiedje J.M."/>
        </authorList>
    </citation>
    <scope>NUCLEOTIDE SEQUENCE [LARGE SCALE GENOMIC DNA]</scope>
    <source>
        <strain>DSM 17307 / VKM B-2377 / 273-4</strain>
    </source>
</reference>
<evidence type="ECO:0000255" key="1">
    <source>
        <dbReference type="HAMAP-Rule" id="MF_01220"/>
    </source>
</evidence>
<sequence>MSDKTPRYSRILLKLSGEALAGTKDMGIDTEVLDKMSLSIAHLRGLGVQVGIVVGGGNLYRGAQLQKEGLVGRVTGDQMGMLATVMNGLAMRDALERRNIKTRLMSALPIGEVTESYSSRNAIRYLKNGEVCIFVAGTGNPFFTTDTAACLRGIEIEAGLILKATKVDGVYDKDPSLHSDAVKYDGLTFDEVLEQKLGVMDLTAIALCREHDVPLQVFDMNKPNALLNVVMGENEGTRVYH</sequence>
<protein>
    <recommendedName>
        <fullName evidence="1">Uridylate kinase</fullName>
        <shortName evidence="1">UK</shortName>
        <ecNumber evidence="1">2.7.4.22</ecNumber>
    </recommendedName>
    <alternativeName>
        <fullName evidence="1">Uridine monophosphate kinase</fullName>
        <shortName evidence="1">UMP kinase</shortName>
        <shortName evidence="1">UMPK</shortName>
    </alternativeName>
</protein>